<organism>
    <name type="scientific">Bos taurus</name>
    <name type="common">Bovine</name>
    <dbReference type="NCBI Taxonomy" id="9913"/>
    <lineage>
        <taxon>Eukaryota</taxon>
        <taxon>Metazoa</taxon>
        <taxon>Chordata</taxon>
        <taxon>Craniata</taxon>
        <taxon>Vertebrata</taxon>
        <taxon>Euteleostomi</taxon>
        <taxon>Mammalia</taxon>
        <taxon>Eutheria</taxon>
        <taxon>Laurasiatheria</taxon>
        <taxon>Artiodactyla</taxon>
        <taxon>Ruminantia</taxon>
        <taxon>Pecora</taxon>
        <taxon>Bovidae</taxon>
        <taxon>Bovinae</taxon>
        <taxon>Bos</taxon>
    </lineage>
</organism>
<protein>
    <recommendedName>
        <fullName>Beta-centractin</fullName>
    </recommendedName>
    <alternativeName>
        <fullName>Actin-related protein 1B</fullName>
        <shortName>ARP1B</shortName>
    </alternativeName>
</protein>
<name>ACTY_BOVIN</name>
<gene>
    <name type="primary">ACTR1B</name>
</gene>
<feature type="chain" id="PRO_0000328040" description="Beta-centractin">
    <location>
        <begin position="1"/>
        <end position="376"/>
    </location>
</feature>
<feature type="modified residue" description="N-acetylmethionine" evidence="2">
    <location>
        <position position="1"/>
    </location>
</feature>
<feature type="modified residue" description="3'-nitrotyrosine" evidence="3">
    <location>
        <position position="4"/>
    </location>
</feature>
<evidence type="ECO:0000250" key="1"/>
<evidence type="ECO:0000250" key="2">
    <source>
        <dbReference type="UniProtKB" id="P42025"/>
    </source>
</evidence>
<evidence type="ECO:0000250" key="3">
    <source>
        <dbReference type="UniProtKB" id="Q8R5C5"/>
    </source>
</evidence>
<evidence type="ECO:0000305" key="4"/>
<sequence length="376" mass="42294">MESYDIIANQPVVIDNGSGVIKAGFAGDQIPKYCFPNYVGRPKHMRVMAGALEGDLFIGPKAEEHRGLLAIRYPMEHGVVRDWNDMERIWQYVYSKDQLQTFSEEHPVLLTEAPLNPSKNREKAAEVFFETFNVPALFISMQAVLSLYATGRTTGVVLDSGDGVTHAVPVYEGFAMPHSIMRVDIAGRDVSRYLRLLLRKEGADFHTSAEFEVVRTIKERACYLSINPQKDEALETEKVQYTLPDGSTLNVGPARFRAPELLFQPDLIGDESEGLHEVLVFAIHKSDMDLRRTLFANIMLSGGSTLFKGFGDRLLSEVKKLAPKDVKIKISAPQERLYSTWIGGSILASLDTFKKMWVSKKEYEEDGSRAIHRKTF</sequence>
<reference key="1">
    <citation type="submission" date="2007-03" db="EMBL/GenBank/DDBJ databases">
        <authorList>
            <consortium name="NIH - Mammalian Gene Collection (MGC) project"/>
        </authorList>
    </citation>
    <scope>NUCLEOTIDE SEQUENCE [LARGE SCALE MRNA]</scope>
    <source>
        <strain>Hereford</strain>
        <tissue>Thalamus</tissue>
    </source>
</reference>
<accession>A4IFE3</accession>
<comment type="function">
    <text evidence="1">Component of a multi-subunit complex involved in microtubule based vesicle motility. It is associated with the centrosome (By similarity).</text>
</comment>
<comment type="subcellular location">
    <subcellularLocation>
        <location evidence="1">Cytoplasm</location>
        <location evidence="1">Cytoskeleton</location>
    </subcellularLocation>
    <subcellularLocation>
        <location evidence="1">Cytoplasm</location>
        <location evidence="1">Cytoskeleton</location>
        <location evidence="1">Microtubule organizing center</location>
        <location evidence="1">Centrosome</location>
    </subcellularLocation>
</comment>
<comment type="similarity">
    <text evidence="4">Belongs to the actin family. ARP1 subfamily.</text>
</comment>
<dbReference type="EMBL" id="BC134541">
    <property type="protein sequence ID" value="AAI34542.1"/>
    <property type="molecule type" value="mRNA"/>
</dbReference>
<dbReference type="RefSeq" id="NP_001096808.1">
    <property type="nucleotide sequence ID" value="NM_001103338.1"/>
</dbReference>
<dbReference type="SMR" id="A4IFE3"/>
<dbReference type="CORUM" id="A4IFE3"/>
<dbReference type="FunCoup" id="A4IFE3">
    <property type="interactions" value="3172"/>
</dbReference>
<dbReference type="STRING" id="9913.ENSBTAP00000059768"/>
<dbReference type="PaxDb" id="9913-ENSBTAP00000028053"/>
<dbReference type="PeptideAtlas" id="A4IFE3"/>
<dbReference type="Ensembl" id="ENSBTAT00000081801.2">
    <property type="protein sequence ID" value="ENSBTAP00000059768.1"/>
    <property type="gene ID" value="ENSBTAG00000048041.3"/>
</dbReference>
<dbReference type="GeneID" id="100125305"/>
<dbReference type="KEGG" id="bta:100125305"/>
<dbReference type="CTD" id="10120"/>
<dbReference type="VEuPathDB" id="HostDB:ENSBTAG00000048041"/>
<dbReference type="VGNC" id="VGNC:54395">
    <property type="gene designation" value="ACTR1B"/>
</dbReference>
<dbReference type="eggNOG" id="KOG0676">
    <property type="taxonomic scope" value="Eukaryota"/>
</dbReference>
<dbReference type="GeneTree" id="ENSGT00940000161587"/>
<dbReference type="InParanoid" id="A4IFE3"/>
<dbReference type="OMA" id="YTTWTGG"/>
<dbReference type="OrthoDB" id="5132116at2759"/>
<dbReference type="Reactome" id="R-BTA-2132295">
    <property type="pathway name" value="MHC class II antigen presentation"/>
</dbReference>
<dbReference type="Reactome" id="R-BTA-6798695">
    <property type="pathway name" value="Neutrophil degranulation"/>
</dbReference>
<dbReference type="Proteomes" id="UP000009136">
    <property type="component" value="Chromosome 11"/>
</dbReference>
<dbReference type="Bgee" id="ENSBTAG00000048041">
    <property type="expression patterns" value="Expressed in cardiac atrium and 106 other cell types or tissues"/>
</dbReference>
<dbReference type="GO" id="GO:0005813">
    <property type="term" value="C:centrosome"/>
    <property type="evidence" value="ECO:0007669"/>
    <property type="project" value="UniProtKB-SubCell"/>
</dbReference>
<dbReference type="GO" id="GO:0005737">
    <property type="term" value="C:cytoplasm"/>
    <property type="evidence" value="ECO:0000250"/>
    <property type="project" value="AgBase"/>
</dbReference>
<dbReference type="GO" id="GO:0005869">
    <property type="term" value="C:dynactin complex"/>
    <property type="evidence" value="ECO:0000318"/>
    <property type="project" value="GO_Central"/>
</dbReference>
<dbReference type="GO" id="GO:0005524">
    <property type="term" value="F:ATP binding"/>
    <property type="evidence" value="ECO:0007669"/>
    <property type="project" value="UniProtKB-KW"/>
</dbReference>
<dbReference type="CDD" id="cd10216">
    <property type="entry name" value="ASKHA_NBD_Arp1"/>
    <property type="match status" value="1"/>
</dbReference>
<dbReference type="FunFam" id="3.30.420.40:FF:000188">
    <property type="entry name" value="Actin like 6B"/>
    <property type="match status" value="2"/>
</dbReference>
<dbReference type="FunFam" id="3.90.640.10:FF:000008">
    <property type="entry name" value="alpha-centractin isoform X1"/>
    <property type="match status" value="1"/>
</dbReference>
<dbReference type="Gene3D" id="3.30.420.40">
    <property type="match status" value="2"/>
</dbReference>
<dbReference type="Gene3D" id="3.90.640.10">
    <property type="entry name" value="Actin, Chain A, domain 4"/>
    <property type="match status" value="1"/>
</dbReference>
<dbReference type="InterPro" id="IPR004000">
    <property type="entry name" value="Actin"/>
</dbReference>
<dbReference type="InterPro" id="IPR020902">
    <property type="entry name" value="Actin/actin-like_CS"/>
</dbReference>
<dbReference type="InterPro" id="IPR004001">
    <property type="entry name" value="Actin_CS"/>
</dbReference>
<dbReference type="InterPro" id="IPR043129">
    <property type="entry name" value="ATPase_NBD"/>
</dbReference>
<dbReference type="PANTHER" id="PTHR11937">
    <property type="entry name" value="ACTIN"/>
    <property type="match status" value="1"/>
</dbReference>
<dbReference type="Pfam" id="PF00022">
    <property type="entry name" value="Actin"/>
    <property type="match status" value="1"/>
</dbReference>
<dbReference type="PRINTS" id="PR00190">
    <property type="entry name" value="ACTIN"/>
</dbReference>
<dbReference type="SMART" id="SM00268">
    <property type="entry name" value="ACTIN"/>
    <property type="match status" value="1"/>
</dbReference>
<dbReference type="SUPFAM" id="SSF53067">
    <property type="entry name" value="Actin-like ATPase domain"/>
    <property type="match status" value="2"/>
</dbReference>
<dbReference type="PROSITE" id="PS00432">
    <property type="entry name" value="ACTINS_2"/>
    <property type="match status" value="1"/>
</dbReference>
<dbReference type="PROSITE" id="PS01132">
    <property type="entry name" value="ACTINS_ACT_LIKE"/>
    <property type="match status" value="1"/>
</dbReference>
<proteinExistence type="evidence at transcript level"/>
<keyword id="KW-0007">Acetylation</keyword>
<keyword id="KW-0067">ATP-binding</keyword>
<keyword id="KW-0963">Cytoplasm</keyword>
<keyword id="KW-0206">Cytoskeleton</keyword>
<keyword id="KW-0944">Nitration</keyword>
<keyword id="KW-0547">Nucleotide-binding</keyword>
<keyword id="KW-1185">Reference proteome</keyword>